<gene>
    <name evidence="2" type="primary">rpsL</name>
    <name type="ordered locus">GOX0384</name>
</gene>
<feature type="chain" id="PRO_0000146230" description="Small ribosomal subunit protein uS12">
    <location>
        <begin position="1"/>
        <end position="123"/>
    </location>
</feature>
<feature type="modified residue" description="3-methylthioaspartic acid" evidence="1">
    <location>
        <position position="89"/>
    </location>
</feature>
<keyword id="KW-0488">Methylation</keyword>
<keyword id="KW-1185">Reference proteome</keyword>
<keyword id="KW-0687">Ribonucleoprotein</keyword>
<keyword id="KW-0689">Ribosomal protein</keyword>
<keyword id="KW-0694">RNA-binding</keyword>
<keyword id="KW-0699">rRNA-binding</keyword>
<keyword id="KW-0820">tRNA-binding</keyword>
<evidence type="ECO:0000250" key="1"/>
<evidence type="ECO:0000255" key="2">
    <source>
        <dbReference type="HAMAP-Rule" id="MF_00403"/>
    </source>
</evidence>
<evidence type="ECO:0000305" key="3"/>
<comment type="function">
    <text evidence="2">With S4 and S5 plays an important role in translational accuracy.</text>
</comment>
<comment type="function">
    <text evidence="2">Interacts with and stabilizes bases of the 16S rRNA that are involved in tRNA selection in the A site and with the mRNA backbone. Located at the interface of the 30S and 50S subunits, it traverses the body of the 30S subunit contacting proteins on the other side and probably holding the rRNA structure together. The combined cluster of proteins S8, S12 and S17 appears to hold together the shoulder and platform of the 30S subunit.</text>
</comment>
<comment type="subunit">
    <text evidence="2">Part of the 30S ribosomal subunit. Contacts proteins S8 and S17. May interact with IF1 in the 30S initiation complex.</text>
</comment>
<comment type="similarity">
    <text evidence="2">Belongs to the universal ribosomal protein uS12 family.</text>
</comment>
<protein>
    <recommendedName>
        <fullName evidence="2">Small ribosomal subunit protein uS12</fullName>
    </recommendedName>
    <alternativeName>
        <fullName evidence="3">30S ribosomal protein S12</fullName>
    </alternativeName>
</protein>
<organism>
    <name type="scientific">Gluconobacter oxydans (strain 621H)</name>
    <name type="common">Gluconobacter suboxydans</name>
    <dbReference type="NCBI Taxonomy" id="290633"/>
    <lineage>
        <taxon>Bacteria</taxon>
        <taxon>Pseudomonadati</taxon>
        <taxon>Pseudomonadota</taxon>
        <taxon>Alphaproteobacteria</taxon>
        <taxon>Acetobacterales</taxon>
        <taxon>Acetobacteraceae</taxon>
        <taxon>Gluconobacter</taxon>
    </lineage>
</organism>
<accession>Q5FTX9</accession>
<proteinExistence type="inferred from homology"/>
<sequence>MPTINQLIANGREPAAKRNKVPALQGCPQKRGVCTRVYTVTPKKPNSALRKVAKVRLTNGYEVVSYIPGEGHNLQEHSVVLIRGGRVKDLPGVRYHILRGVLDTQGLAKRRQRRSLYGAKRPK</sequence>
<name>RS12_GLUOX</name>
<dbReference type="EMBL" id="CP000009">
    <property type="protein sequence ID" value="AAW60167.1"/>
    <property type="molecule type" value="Genomic_DNA"/>
</dbReference>
<dbReference type="RefSeq" id="WP_011251969.1">
    <property type="nucleotide sequence ID" value="NZ_LT900338.1"/>
</dbReference>
<dbReference type="SMR" id="Q5FTX9"/>
<dbReference type="STRING" id="290633.GOX0384"/>
<dbReference type="GeneID" id="76195086"/>
<dbReference type="KEGG" id="gox:GOX0384"/>
<dbReference type="eggNOG" id="COG0048">
    <property type="taxonomic scope" value="Bacteria"/>
</dbReference>
<dbReference type="HOGENOM" id="CLU_104295_1_2_5"/>
<dbReference type="Proteomes" id="UP000006375">
    <property type="component" value="Chromosome"/>
</dbReference>
<dbReference type="GO" id="GO:0015935">
    <property type="term" value="C:small ribosomal subunit"/>
    <property type="evidence" value="ECO:0007669"/>
    <property type="project" value="InterPro"/>
</dbReference>
<dbReference type="GO" id="GO:0019843">
    <property type="term" value="F:rRNA binding"/>
    <property type="evidence" value="ECO:0007669"/>
    <property type="project" value="UniProtKB-UniRule"/>
</dbReference>
<dbReference type="GO" id="GO:0003735">
    <property type="term" value="F:structural constituent of ribosome"/>
    <property type="evidence" value="ECO:0007669"/>
    <property type="project" value="InterPro"/>
</dbReference>
<dbReference type="GO" id="GO:0000049">
    <property type="term" value="F:tRNA binding"/>
    <property type="evidence" value="ECO:0007669"/>
    <property type="project" value="UniProtKB-UniRule"/>
</dbReference>
<dbReference type="GO" id="GO:0006412">
    <property type="term" value="P:translation"/>
    <property type="evidence" value="ECO:0007669"/>
    <property type="project" value="UniProtKB-UniRule"/>
</dbReference>
<dbReference type="CDD" id="cd03368">
    <property type="entry name" value="Ribosomal_S12"/>
    <property type="match status" value="1"/>
</dbReference>
<dbReference type="FunFam" id="2.40.50.140:FF:000001">
    <property type="entry name" value="30S ribosomal protein S12"/>
    <property type="match status" value="1"/>
</dbReference>
<dbReference type="Gene3D" id="2.40.50.140">
    <property type="entry name" value="Nucleic acid-binding proteins"/>
    <property type="match status" value="1"/>
</dbReference>
<dbReference type="HAMAP" id="MF_00403_B">
    <property type="entry name" value="Ribosomal_uS12_B"/>
    <property type="match status" value="1"/>
</dbReference>
<dbReference type="InterPro" id="IPR012340">
    <property type="entry name" value="NA-bd_OB-fold"/>
</dbReference>
<dbReference type="InterPro" id="IPR006032">
    <property type="entry name" value="Ribosomal_uS12"/>
</dbReference>
<dbReference type="InterPro" id="IPR005679">
    <property type="entry name" value="Ribosomal_uS12_bac"/>
</dbReference>
<dbReference type="NCBIfam" id="TIGR00981">
    <property type="entry name" value="rpsL_bact"/>
    <property type="match status" value="1"/>
</dbReference>
<dbReference type="PANTHER" id="PTHR11652">
    <property type="entry name" value="30S RIBOSOMAL PROTEIN S12 FAMILY MEMBER"/>
    <property type="match status" value="1"/>
</dbReference>
<dbReference type="Pfam" id="PF00164">
    <property type="entry name" value="Ribosom_S12_S23"/>
    <property type="match status" value="1"/>
</dbReference>
<dbReference type="PIRSF" id="PIRSF002133">
    <property type="entry name" value="Ribosomal_S12/S23"/>
    <property type="match status" value="1"/>
</dbReference>
<dbReference type="PRINTS" id="PR01034">
    <property type="entry name" value="RIBOSOMALS12"/>
</dbReference>
<dbReference type="SUPFAM" id="SSF50249">
    <property type="entry name" value="Nucleic acid-binding proteins"/>
    <property type="match status" value="1"/>
</dbReference>
<dbReference type="PROSITE" id="PS00055">
    <property type="entry name" value="RIBOSOMAL_S12"/>
    <property type="match status" value="1"/>
</dbReference>
<reference key="1">
    <citation type="journal article" date="2005" name="Nat. Biotechnol.">
        <title>Complete genome sequence of the acetic acid bacterium Gluconobacter oxydans.</title>
        <authorList>
            <person name="Prust C."/>
            <person name="Hoffmeister M."/>
            <person name="Liesegang H."/>
            <person name="Wiezer A."/>
            <person name="Fricke W.F."/>
            <person name="Ehrenreich A."/>
            <person name="Gottschalk G."/>
            <person name="Deppenmeier U."/>
        </authorList>
    </citation>
    <scope>NUCLEOTIDE SEQUENCE [LARGE SCALE GENOMIC DNA]</scope>
    <source>
        <strain>621H</strain>
    </source>
</reference>